<sequence length="118" mass="13275">MTDKVLKRKQLLKVKRKLRTRGKIFGRADKPRVSVFKSNKYFYAQAINDELGVTLASVDGKKLGLGNNKENAKQIANEFATSLKKAKITEVVFDRNGYLYHGVVAAFADTLRENGIKL</sequence>
<name>RL18_HELHP</name>
<dbReference type="EMBL" id="AE017125">
    <property type="protein sequence ID" value="AAP77991.1"/>
    <property type="molecule type" value="Genomic_DNA"/>
</dbReference>
<dbReference type="RefSeq" id="WP_011116234.1">
    <property type="nucleotide sequence ID" value="NC_004917.1"/>
</dbReference>
<dbReference type="SMR" id="Q7VGC8"/>
<dbReference type="STRING" id="235279.HH_1394"/>
<dbReference type="KEGG" id="hhe:HH_1394"/>
<dbReference type="eggNOG" id="COG0256">
    <property type="taxonomic scope" value="Bacteria"/>
</dbReference>
<dbReference type="HOGENOM" id="CLU_098841_0_1_7"/>
<dbReference type="OrthoDB" id="9810939at2"/>
<dbReference type="Proteomes" id="UP000002495">
    <property type="component" value="Chromosome"/>
</dbReference>
<dbReference type="GO" id="GO:0022625">
    <property type="term" value="C:cytosolic large ribosomal subunit"/>
    <property type="evidence" value="ECO:0007669"/>
    <property type="project" value="TreeGrafter"/>
</dbReference>
<dbReference type="GO" id="GO:0008097">
    <property type="term" value="F:5S rRNA binding"/>
    <property type="evidence" value="ECO:0007669"/>
    <property type="project" value="TreeGrafter"/>
</dbReference>
<dbReference type="GO" id="GO:0003735">
    <property type="term" value="F:structural constituent of ribosome"/>
    <property type="evidence" value="ECO:0007669"/>
    <property type="project" value="InterPro"/>
</dbReference>
<dbReference type="GO" id="GO:0006412">
    <property type="term" value="P:translation"/>
    <property type="evidence" value="ECO:0007669"/>
    <property type="project" value="UniProtKB-UniRule"/>
</dbReference>
<dbReference type="CDD" id="cd00432">
    <property type="entry name" value="Ribosomal_L18_L5e"/>
    <property type="match status" value="1"/>
</dbReference>
<dbReference type="Gene3D" id="3.30.420.100">
    <property type="match status" value="1"/>
</dbReference>
<dbReference type="HAMAP" id="MF_01337_B">
    <property type="entry name" value="Ribosomal_uL18_B"/>
    <property type="match status" value="1"/>
</dbReference>
<dbReference type="InterPro" id="IPR004389">
    <property type="entry name" value="Ribosomal_uL18_bac-type"/>
</dbReference>
<dbReference type="InterPro" id="IPR005484">
    <property type="entry name" value="Ribosomal_uL18_bac/euk"/>
</dbReference>
<dbReference type="NCBIfam" id="TIGR00060">
    <property type="entry name" value="L18_bact"/>
    <property type="match status" value="1"/>
</dbReference>
<dbReference type="PANTHER" id="PTHR12899">
    <property type="entry name" value="39S RIBOSOMAL PROTEIN L18, MITOCHONDRIAL"/>
    <property type="match status" value="1"/>
</dbReference>
<dbReference type="PANTHER" id="PTHR12899:SF3">
    <property type="entry name" value="LARGE RIBOSOMAL SUBUNIT PROTEIN UL18M"/>
    <property type="match status" value="1"/>
</dbReference>
<dbReference type="Pfam" id="PF00861">
    <property type="entry name" value="Ribosomal_L18p"/>
    <property type="match status" value="1"/>
</dbReference>
<dbReference type="SUPFAM" id="SSF53137">
    <property type="entry name" value="Translational machinery components"/>
    <property type="match status" value="1"/>
</dbReference>
<comment type="function">
    <text evidence="1">This is one of the proteins that bind and probably mediate the attachment of the 5S RNA into the large ribosomal subunit, where it forms part of the central protuberance.</text>
</comment>
<comment type="subunit">
    <text evidence="1">Part of the 50S ribosomal subunit; part of the 5S rRNA/L5/L18/L25 subcomplex. Contacts the 5S and 23S rRNAs.</text>
</comment>
<comment type="similarity">
    <text evidence="1">Belongs to the universal ribosomal protein uL18 family.</text>
</comment>
<protein>
    <recommendedName>
        <fullName evidence="1">Large ribosomal subunit protein uL18</fullName>
    </recommendedName>
    <alternativeName>
        <fullName evidence="2">50S ribosomal protein L18</fullName>
    </alternativeName>
</protein>
<reference key="1">
    <citation type="journal article" date="2003" name="Proc. Natl. Acad. Sci. U.S.A.">
        <title>The complete genome sequence of the carcinogenic bacterium Helicobacter hepaticus.</title>
        <authorList>
            <person name="Suerbaum S."/>
            <person name="Josenhans C."/>
            <person name="Sterzenbach T."/>
            <person name="Drescher B."/>
            <person name="Brandt P."/>
            <person name="Bell M."/>
            <person name="Droege M."/>
            <person name="Fartmann B."/>
            <person name="Fischer H.-P."/>
            <person name="Ge Z."/>
            <person name="Hoerster A."/>
            <person name="Holland R."/>
            <person name="Klein K."/>
            <person name="Koenig J."/>
            <person name="Macko L."/>
            <person name="Mendz G.L."/>
            <person name="Nyakatura G."/>
            <person name="Schauer D.B."/>
            <person name="Shen Z."/>
            <person name="Weber J."/>
            <person name="Frosch M."/>
            <person name="Fox J.G."/>
        </authorList>
    </citation>
    <scope>NUCLEOTIDE SEQUENCE [LARGE SCALE GENOMIC DNA]</scope>
    <source>
        <strain>ATCC 51449 / 3B1</strain>
    </source>
</reference>
<evidence type="ECO:0000255" key="1">
    <source>
        <dbReference type="HAMAP-Rule" id="MF_01337"/>
    </source>
</evidence>
<evidence type="ECO:0000305" key="2"/>
<organism>
    <name type="scientific">Helicobacter hepaticus (strain ATCC 51449 / 3B1)</name>
    <dbReference type="NCBI Taxonomy" id="235279"/>
    <lineage>
        <taxon>Bacteria</taxon>
        <taxon>Pseudomonadati</taxon>
        <taxon>Campylobacterota</taxon>
        <taxon>Epsilonproteobacteria</taxon>
        <taxon>Campylobacterales</taxon>
        <taxon>Helicobacteraceae</taxon>
        <taxon>Helicobacter</taxon>
    </lineage>
</organism>
<accession>Q7VGC8</accession>
<feature type="chain" id="PRO_0000131273" description="Large ribosomal subunit protein uL18">
    <location>
        <begin position="1"/>
        <end position="118"/>
    </location>
</feature>
<keyword id="KW-1185">Reference proteome</keyword>
<keyword id="KW-0687">Ribonucleoprotein</keyword>
<keyword id="KW-0689">Ribosomal protein</keyword>
<keyword id="KW-0694">RNA-binding</keyword>
<keyword id="KW-0699">rRNA-binding</keyword>
<gene>
    <name evidence="1" type="primary">rplR</name>
    <name type="ordered locus">HH_1394</name>
</gene>
<proteinExistence type="inferred from homology"/>